<dbReference type="EC" id="1.14.16.1" evidence="1"/>
<dbReference type="EMBL" id="X51942">
    <property type="protein sequence ID" value="CAA36205.1"/>
    <property type="molecule type" value="mRNA"/>
</dbReference>
<dbReference type="EMBL" id="AC122360">
    <property type="status" value="NOT_ANNOTATED_CDS"/>
    <property type="molecule type" value="Genomic_DNA"/>
</dbReference>
<dbReference type="EMBL" id="BC013458">
    <property type="protein sequence ID" value="AAH13458.1"/>
    <property type="molecule type" value="mRNA"/>
</dbReference>
<dbReference type="CCDS" id="CCDS24102.1"/>
<dbReference type="PIR" id="S15758">
    <property type="entry name" value="S15758"/>
</dbReference>
<dbReference type="RefSeq" id="NP_032803.2">
    <property type="nucleotide sequence ID" value="NM_008777.3"/>
</dbReference>
<dbReference type="SMR" id="P16331"/>
<dbReference type="CORUM" id="P16331"/>
<dbReference type="FunCoup" id="P16331">
    <property type="interactions" value="132"/>
</dbReference>
<dbReference type="STRING" id="10090.ENSMUSP00000020241"/>
<dbReference type="GlyGen" id="P16331">
    <property type="glycosylation" value="1 site, 1 O-linked glycan (1 site)"/>
</dbReference>
<dbReference type="iPTMnet" id="P16331"/>
<dbReference type="PhosphoSitePlus" id="P16331"/>
<dbReference type="SwissPalm" id="P16331"/>
<dbReference type="jPOST" id="P16331"/>
<dbReference type="PaxDb" id="10090-ENSMUSP00000020241"/>
<dbReference type="PeptideAtlas" id="P16331"/>
<dbReference type="ProteomicsDB" id="301807"/>
<dbReference type="Antibodypedia" id="30481">
    <property type="antibodies" value="285 antibodies from 31 providers"/>
</dbReference>
<dbReference type="DNASU" id="18478"/>
<dbReference type="Ensembl" id="ENSMUST00000020241.17">
    <property type="protein sequence ID" value="ENSMUSP00000020241.8"/>
    <property type="gene ID" value="ENSMUSG00000020051.18"/>
</dbReference>
<dbReference type="GeneID" id="18478"/>
<dbReference type="KEGG" id="mmu:18478"/>
<dbReference type="UCSC" id="uc007gqt.2">
    <property type="organism name" value="mouse"/>
</dbReference>
<dbReference type="AGR" id="MGI:97473"/>
<dbReference type="CTD" id="5053"/>
<dbReference type="MGI" id="MGI:97473">
    <property type="gene designation" value="Pah"/>
</dbReference>
<dbReference type="VEuPathDB" id="HostDB:ENSMUSG00000020051"/>
<dbReference type="eggNOG" id="KOG3820">
    <property type="taxonomic scope" value="Eukaryota"/>
</dbReference>
<dbReference type="GeneTree" id="ENSGT00950000182885"/>
<dbReference type="HOGENOM" id="CLU_023198_0_1_1"/>
<dbReference type="InParanoid" id="P16331"/>
<dbReference type="OMA" id="FHDEVYR"/>
<dbReference type="OrthoDB" id="983542at2759"/>
<dbReference type="PhylomeDB" id="P16331"/>
<dbReference type="TreeFam" id="TF313327"/>
<dbReference type="Reactome" id="R-MMU-8964208">
    <property type="pathway name" value="Phenylalanine metabolism"/>
</dbReference>
<dbReference type="UniPathway" id="UPA00139">
    <property type="reaction ID" value="UER00337"/>
</dbReference>
<dbReference type="BioGRID-ORCS" id="18478">
    <property type="hits" value="2 hits in 80 CRISPR screens"/>
</dbReference>
<dbReference type="ChiTaRS" id="Pah">
    <property type="organism name" value="mouse"/>
</dbReference>
<dbReference type="PRO" id="PR:P16331"/>
<dbReference type="Proteomes" id="UP000000589">
    <property type="component" value="Chromosome 10"/>
</dbReference>
<dbReference type="RNAct" id="P16331">
    <property type="molecule type" value="protein"/>
</dbReference>
<dbReference type="Bgee" id="ENSMUSG00000020051">
    <property type="expression patterns" value="Expressed in adult mammalian kidney and 67 other cell types or tissues"/>
</dbReference>
<dbReference type="ExpressionAtlas" id="P16331">
    <property type="expression patterns" value="baseline and differential"/>
</dbReference>
<dbReference type="GO" id="GO:0005506">
    <property type="term" value="F:iron ion binding"/>
    <property type="evidence" value="ECO:0007669"/>
    <property type="project" value="InterPro"/>
</dbReference>
<dbReference type="GO" id="GO:0004505">
    <property type="term" value="F:phenylalanine 4-monooxygenase activity"/>
    <property type="evidence" value="ECO:0000315"/>
    <property type="project" value="MGI"/>
</dbReference>
<dbReference type="GO" id="GO:0006559">
    <property type="term" value="P:L-phenylalanine catabolic process"/>
    <property type="evidence" value="ECO:0007669"/>
    <property type="project" value="UniProtKB-UniPathway"/>
</dbReference>
<dbReference type="CDD" id="cd04931">
    <property type="entry name" value="ACT_PAH"/>
    <property type="match status" value="1"/>
</dbReference>
<dbReference type="CDD" id="cd03347">
    <property type="entry name" value="eu_PheOH"/>
    <property type="match status" value="1"/>
</dbReference>
<dbReference type="FunFam" id="1.10.800.10:FF:000003">
    <property type="entry name" value="Phenylalanine-4-hydroxylase"/>
    <property type="match status" value="1"/>
</dbReference>
<dbReference type="Gene3D" id="1.10.800.10">
    <property type="entry name" value="Aromatic amino acid hydroxylase"/>
    <property type="match status" value="1"/>
</dbReference>
<dbReference type="InterPro" id="IPR045865">
    <property type="entry name" value="ACT-like_dom_sf"/>
</dbReference>
<dbReference type="InterPro" id="IPR002912">
    <property type="entry name" value="ACT_dom"/>
</dbReference>
<dbReference type="InterPro" id="IPR001273">
    <property type="entry name" value="ArAA_hydroxylase"/>
</dbReference>
<dbReference type="InterPro" id="IPR018301">
    <property type="entry name" value="ArAA_hydroxylase_Fe/CU_BS"/>
</dbReference>
<dbReference type="InterPro" id="IPR036951">
    <property type="entry name" value="ArAA_hydroxylase_sf"/>
</dbReference>
<dbReference type="InterPro" id="IPR036329">
    <property type="entry name" value="Aro-AA_hydroxylase_C_sf"/>
</dbReference>
<dbReference type="InterPro" id="IPR019774">
    <property type="entry name" value="Aromatic-AA_hydroxylase_C"/>
</dbReference>
<dbReference type="InterPro" id="IPR041912">
    <property type="entry name" value="Euk_PheOH_cat"/>
</dbReference>
<dbReference type="InterPro" id="IPR005961">
    <property type="entry name" value="Phe-4-hydroxylase_tetra"/>
</dbReference>
<dbReference type="InterPro" id="IPR019773">
    <property type="entry name" value="Tyrosine_3-monooxygenase-like"/>
</dbReference>
<dbReference type="NCBIfam" id="TIGR01268">
    <property type="entry name" value="Phe4hydrox_tetr"/>
    <property type="match status" value="1"/>
</dbReference>
<dbReference type="PANTHER" id="PTHR11473">
    <property type="entry name" value="AROMATIC AMINO ACID HYDROXYLASE"/>
    <property type="match status" value="1"/>
</dbReference>
<dbReference type="PANTHER" id="PTHR11473:SF24">
    <property type="entry name" value="PHENYLALANINE-4-HYDROXYLASE"/>
    <property type="match status" value="1"/>
</dbReference>
<dbReference type="Pfam" id="PF01842">
    <property type="entry name" value="ACT"/>
    <property type="match status" value="1"/>
</dbReference>
<dbReference type="Pfam" id="PF00351">
    <property type="entry name" value="Biopterin_H"/>
    <property type="match status" value="1"/>
</dbReference>
<dbReference type="PIRSF" id="PIRSF000336">
    <property type="entry name" value="TH"/>
    <property type="match status" value="1"/>
</dbReference>
<dbReference type="PRINTS" id="PR00372">
    <property type="entry name" value="FYWHYDRXLASE"/>
</dbReference>
<dbReference type="SUPFAM" id="SSF55021">
    <property type="entry name" value="ACT-like"/>
    <property type="match status" value="1"/>
</dbReference>
<dbReference type="SUPFAM" id="SSF56534">
    <property type="entry name" value="Aromatic aminoacid monoxygenases, catalytic and oligomerization domains"/>
    <property type="match status" value="1"/>
</dbReference>
<dbReference type="PROSITE" id="PS51671">
    <property type="entry name" value="ACT"/>
    <property type="match status" value="1"/>
</dbReference>
<dbReference type="PROSITE" id="PS00367">
    <property type="entry name" value="BH4_AAA_HYDROXYL_1"/>
    <property type="match status" value="1"/>
</dbReference>
<dbReference type="PROSITE" id="PS51410">
    <property type="entry name" value="BH4_AAA_HYDROXYL_2"/>
    <property type="match status" value="1"/>
</dbReference>
<name>PH4H_MOUSE</name>
<feature type="initiator methionine" description="Removed" evidence="5">
    <location>
        <position position="1"/>
    </location>
</feature>
<feature type="chain" id="PRO_0000205549" description="Phenylalanine-4-hydroxylase">
    <location>
        <begin position="2"/>
        <end position="453"/>
    </location>
</feature>
<feature type="domain" description="ACT" evidence="3">
    <location>
        <begin position="36"/>
        <end position="114"/>
    </location>
</feature>
<feature type="binding site" evidence="2">
    <location>
        <position position="285"/>
    </location>
    <ligand>
        <name>Fe cation</name>
        <dbReference type="ChEBI" id="CHEBI:24875"/>
    </ligand>
</feature>
<feature type="binding site" evidence="2">
    <location>
        <position position="290"/>
    </location>
    <ligand>
        <name>Fe cation</name>
        <dbReference type="ChEBI" id="CHEBI:24875"/>
    </ligand>
</feature>
<feature type="binding site" evidence="2">
    <location>
        <position position="330"/>
    </location>
    <ligand>
        <name>Fe cation</name>
        <dbReference type="ChEBI" id="CHEBI:24875"/>
    </ligand>
</feature>
<feature type="modified residue" description="N-acetylalanine" evidence="5">
    <location>
        <position position="2"/>
    </location>
</feature>
<feature type="modified residue" description="Phosphoserine" evidence="7">
    <location>
        <position position="16"/>
    </location>
</feature>
<feature type="mutagenesis site" description="Mutant mice have mild features of phenylketonuria." evidence="4">
    <original>V</original>
    <variation>A</variation>
    <location>
        <position position="106"/>
    </location>
</feature>
<feature type="mutagenesis site" description="Mutant mice have features of phenylketonuria." evidence="4">
    <original>F</original>
    <variation>S</variation>
    <location>
        <position position="263"/>
    </location>
</feature>
<feature type="sequence conflict" description="In Ref. 1; CAA36205." evidence="6" ref="1">
    <original>Q</original>
    <variation>R</variation>
    <location>
        <position position="383"/>
    </location>
</feature>
<feature type="sequence conflict" description="In Ref. 1; CAA36205." evidence="6" ref="1">
    <original>I</original>
    <variation>N</variation>
    <location>
        <position position="432"/>
    </location>
</feature>
<accession>P16331</accession>
<accession>Q91WV1</accession>
<gene>
    <name type="primary">Pah</name>
</gene>
<keyword id="KW-0007">Acetylation</keyword>
<keyword id="KW-0021">Allosteric enzyme</keyword>
<keyword id="KW-0903">Direct protein sequencing</keyword>
<keyword id="KW-0225">Disease variant</keyword>
<keyword id="KW-0408">Iron</keyword>
<keyword id="KW-0479">Metal-binding</keyword>
<keyword id="KW-0503">Monooxygenase</keyword>
<keyword id="KW-0560">Oxidoreductase</keyword>
<keyword id="KW-0585">Phenylalanine catabolism</keyword>
<keyword id="KW-0597">Phosphoprotein</keyword>
<keyword id="KW-1185">Reference proteome</keyword>
<reference key="1">
    <citation type="journal article" date="1990" name="Biochem. J.">
        <title>Mouse phenylalanine hydroxylase. Homology and divergence from human phenylalanine hydroxylase.</title>
        <authorList>
            <person name="Ledley F.D."/>
            <person name="Grenett H.E."/>
            <person name="Dunbar B.S."/>
            <person name="Woo S.L.C."/>
        </authorList>
    </citation>
    <scope>NUCLEOTIDE SEQUENCE [MRNA]</scope>
    <source>
        <strain>C57BL/6J</strain>
        <tissue>Liver</tissue>
    </source>
</reference>
<reference key="2">
    <citation type="journal article" date="2009" name="PLoS Biol.">
        <title>Lineage-specific biology revealed by a finished genome assembly of the mouse.</title>
        <authorList>
            <person name="Church D.M."/>
            <person name="Goodstadt L."/>
            <person name="Hillier L.W."/>
            <person name="Zody M.C."/>
            <person name="Goldstein S."/>
            <person name="She X."/>
            <person name="Bult C.J."/>
            <person name="Agarwala R."/>
            <person name="Cherry J.L."/>
            <person name="DiCuccio M."/>
            <person name="Hlavina W."/>
            <person name="Kapustin Y."/>
            <person name="Meric P."/>
            <person name="Maglott D."/>
            <person name="Birtle Z."/>
            <person name="Marques A.C."/>
            <person name="Graves T."/>
            <person name="Zhou S."/>
            <person name="Teague B."/>
            <person name="Potamousis K."/>
            <person name="Churas C."/>
            <person name="Place M."/>
            <person name="Herschleb J."/>
            <person name="Runnheim R."/>
            <person name="Forrest D."/>
            <person name="Amos-Landgraf J."/>
            <person name="Schwartz D.C."/>
            <person name="Cheng Z."/>
            <person name="Lindblad-Toh K."/>
            <person name="Eichler E.E."/>
            <person name="Ponting C.P."/>
        </authorList>
    </citation>
    <scope>NUCLEOTIDE SEQUENCE [LARGE SCALE GENOMIC DNA]</scope>
    <source>
        <strain>C57BL/6J</strain>
    </source>
</reference>
<reference key="3">
    <citation type="journal article" date="2004" name="Genome Res.">
        <title>The status, quality, and expansion of the NIH full-length cDNA project: the Mammalian Gene Collection (MGC).</title>
        <authorList>
            <consortium name="The MGC Project Team"/>
        </authorList>
    </citation>
    <scope>NUCLEOTIDE SEQUENCE [LARGE SCALE MRNA]</scope>
    <source>
        <strain>FVB/N</strain>
        <tissue>Kidney</tissue>
    </source>
</reference>
<reference key="4">
    <citation type="submission" date="2005-07" db="UniProtKB">
        <authorList>
            <person name="Bienvenut W.V."/>
        </authorList>
    </citation>
    <scope>PROTEIN SEQUENCE OF 2-13; 54-68; 160-169 AND 253-261</scope>
    <scope>CLEAVAGE OF INITIATOR METHIONINE</scope>
    <scope>ACETYLATION AT ALA-2</scope>
    <scope>IDENTIFICATION BY MASS SPECTROMETRY</scope>
    <source>
        <strain>C57BL/6J</strain>
        <tissue>Liver</tissue>
    </source>
</reference>
<reference key="5">
    <citation type="journal article" date="1980" name="Biochem. Biophys. Res. Commun.">
        <title>Amino acid sequence at the phosphorylated site of rat liver phenylalanine hydroxylase and phosphorylation of a corresponding synthetic peptide.</title>
        <authorList>
            <person name="Wretborn M."/>
            <person name="Humble E."/>
            <person name="Ragnarsson U."/>
            <person name="Engstrom L."/>
        </authorList>
    </citation>
    <scope>PROTEIN SEQUENCE OF 12-21</scope>
</reference>
<reference key="6">
    <citation type="journal article" date="1984" name="Biochemistry">
        <title>Sequence comparison of rat liver phenylalanine hydroxylase and its cDNA clones.</title>
        <authorList>
            <person name="Robson K.J.H."/>
            <person name="Beattie W."/>
            <person name="James R.J."/>
            <person name="Cotton R.C.H."/>
            <person name="Morgan F.J."/>
            <person name="Woo S.L.C."/>
        </authorList>
    </citation>
    <scope>PROTEIN SEQUENCE OF 277-294</scope>
</reference>
<reference key="7">
    <citation type="journal article" date="2010" name="Cell">
        <title>A tissue-specific atlas of mouse protein phosphorylation and expression.</title>
        <authorList>
            <person name="Huttlin E.L."/>
            <person name="Jedrychowski M.P."/>
            <person name="Elias J.E."/>
            <person name="Goswami T."/>
            <person name="Rad R."/>
            <person name="Beausoleil S.A."/>
            <person name="Villen J."/>
            <person name="Haas W."/>
            <person name="Sowa M.E."/>
            <person name="Gygi S.P."/>
        </authorList>
    </citation>
    <scope>PHOSPHORYLATION [LARGE SCALE ANALYSIS] AT SER-16</scope>
    <scope>IDENTIFICATION BY MASS SPECTROMETRY [LARGE SCALE ANALYSIS]</scope>
    <source>
        <tissue>Kidney</tissue>
        <tissue>Liver</tissue>
        <tissue>Pancreas</tissue>
    </source>
</reference>
<reference key="8">
    <citation type="journal article" date="1997" name="Genomics">
        <title>Characterization of mutations at the mouse phenylalanine hydroxylase locus.</title>
        <authorList>
            <person name="McDonald J.D."/>
            <person name="Charlton C.K."/>
        </authorList>
    </citation>
    <scope>MUTAGENESIS OF VAL-106 AND PHE-263</scope>
</reference>
<proteinExistence type="evidence at protein level"/>
<organism>
    <name type="scientific">Mus musculus</name>
    <name type="common">Mouse</name>
    <dbReference type="NCBI Taxonomy" id="10090"/>
    <lineage>
        <taxon>Eukaryota</taxon>
        <taxon>Metazoa</taxon>
        <taxon>Chordata</taxon>
        <taxon>Craniata</taxon>
        <taxon>Vertebrata</taxon>
        <taxon>Euteleostomi</taxon>
        <taxon>Mammalia</taxon>
        <taxon>Eutheria</taxon>
        <taxon>Euarchontoglires</taxon>
        <taxon>Glires</taxon>
        <taxon>Rodentia</taxon>
        <taxon>Myomorpha</taxon>
        <taxon>Muroidea</taxon>
        <taxon>Muridae</taxon>
        <taxon>Murinae</taxon>
        <taxon>Mus</taxon>
        <taxon>Mus</taxon>
    </lineage>
</organism>
<comment type="function">
    <text evidence="1">Catalyzes the hydroxylation of L-phenylalanine to L-tyrosine.</text>
</comment>
<comment type="catalytic activity">
    <reaction evidence="1">
        <text>(6R)-L-erythro-5,6,7,8-tetrahydrobiopterin + L-phenylalanine + O2 = (4aS,6R)-4a-hydroxy-L-erythro-5,6,7,8-tetrahydrobiopterin + L-tyrosine</text>
        <dbReference type="Rhea" id="RHEA:20273"/>
        <dbReference type="ChEBI" id="CHEBI:15379"/>
        <dbReference type="ChEBI" id="CHEBI:15642"/>
        <dbReference type="ChEBI" id="CHEBI:58095"/>
        <dbReference type="ChEBI" id="CHEBI:58315"/>
        <dbReference type="ChEBI" id="CHEBI:59560"/>
        <dbReference type="EC" id="1.14.16.1"/>
    </reaction>
</comment>
<comment type="cofactor">
    <cofactor evidence="2">
        <name>Fe(2+)</name>
        <dbReference type="ChEBI" id="CHEBI:29033"/>
    </cofactor>
</comment>
<comment type="activity regulation">
    <text evidence="1">N-terminal region of PAH is thought to contain allosteric binding sites for phenylalanine and to constitute an 'inhibitory' domain that regulates the activity of a catalytic domain in the C-terminal portion of the molecule.</text>
</comment>
<comment type="pathway">
    <text>Amino-acid degradation; L-phenylalanine degradation; acetoacetate and fumarate from L-phenylalanine: step 1/6.</text>
</comment>
<comment type="subunit">
    <text evidence="2">Homodimer and homotetramer.</text>
</comment>
<comment type="PTM">
    <text evidence="1">Phosphorylation at Ser-16 increases basal activity and facilitates activation by the substrate phenylalanine.</text>
</comment>
<comment type="similarity">
    <text evidence="6">Belongs to the biopterin-dependent aromatic amino acid hydroxylase family.</text>
</comment>
<sequence>MAAVVLENGVLSRKLSDFGQETSYIEDNSNQNGAVSLIFSLKEEVGALAKVLRLFEENEINLTHIESRPSRLNKDEYEFFTYLDKRSKPVLGSIIKSLRNDIGATVHELSRDKEKNTVPWFPRTIQELDRFANQILSYGAELDADHPGFKDPVYRARRKQFADIAYNYRHGQPIPRVEYTEEERKTWGTVFRTLKALYKTHACYEHNHIFPLLEKYCGFREDNIPQLEDVSQFLQTCTGFRLRPVAGLLSSRDFLGGLAFRVFHCTQYIRHGSKPMYTPEPDICHELLGHVPLFSDRSFAQFSQEIGLASLGAPDEYIEKLATIYWFTVEFGLCKEGDSIKAYGAGLLSSFGELQYCLSDKPKLLPLELEKTACQEYTVTEFQPLYYVAESFNDAKEKVRTFAATIPRPFSVRYDPYTQRVEVLDNTQQLKILADSINSEVGILCHALQKIKS</sequence>
<protein>
    <recommendedName>
        <fullName>Phenylalanine-4-hydroxylase</fullName>
        <shortName>PAH</shortName>
        <ecNumber evidence="1">1.14.16.1</ecNumber>
    </recommendedName>
    <alternativeName>
        <fullName>Phe-4-monooxygenase</fullName>
    </alternativeName>
</protein>
<evidence type="ECO:0000250" key="1">
    <source>
        <dbReference type="UniProtKB" id="P00439"/>
    </source>
</evidence>
<evidence type="ECO:0000250" key="2">
    <source>
        <dbReference type="UniProtKB" id="P04176"/>
    </source>
</evidence>
<evidence type="ECO:0000255" key="3">
    <source>
        <dbReference type="PROSITE-ProRule" id="PRU01007"/>
    </source>
</evidence>
<evidence type="ECO:0000269" key="4">
    <source>
    </source>
</evidence>
<evidence type="ECO:0000269" key="5">
    <source ref="4"/>
</evidence>
<evidence type="ECO:0000305" key="6"/>
<evidence type="ECO:0007744" key="7">
    <source>
    </source>
</evidence>